<protein>
    <recommendedName>
        <fullName evidence="1 3">Ion-translocating oxidoreductase complex subunit A</fullName>
        <ecNumber evidence="1 3">7.2.1.-</ecNumber>
    </recommendedName>
    <alternativeName>
        <fullName evidence="1 3">Rnf electron transport complex subunit A</fullName>
    </alternativeName>
</protein>
<comment type="function">
    <text evidence="2">Part of a membrane-bound complex that couples electron transfer with translocation of ions across the membrane. Catalyzes Na(+) transport, most probably coupled to electron transfer from reduced ferredoxin to methanophenazine and heterodisulfide reductase. Involved in heterodisulfide reduction during methanogenesis from acetate.</text>
</comment>
<comment type="subunit">
    <text evidence="1 4">The Rnf complex is probably composed of eight subunits, including RnfA, RnfB, RnfC, RnfD, RnfE and RnfG.</text>
</comment>
<comment type="subcellular location">
    <subcellularLocation>
        <location evidence="1">Cell membrane</location>
        <topology evidence="1">Multi-pass membrane protein</topology>
    </subcellularLocation>
</comment>
<comment type="disruption phenotype">
    <text evidence="2">Deletion of the rnf operon abolishes growth on acetate and ferredoxin:heterodisulfide oxidoreductase-coupled Na(+) transport.</text>
</comment>
<comment type="similarity">
    <text evidence="1">Belongs to the NqrDE/RnfAE family.</text>
</comment>
<gene>
    <name evidence="1" type="primary">rnfA</name>
    <name evidence="5" type="ordered locus">MA_0663</name>
</gene>
<keyword id="KW-1003">Cell membrane</keyword>
<keyword id="KW-0249">Electron transport</keyword>
<keyword id="KW-0472">Membrane</keyword>
<keyword id="KW-1185">Reference proteome</keyword>
<keyword id="KW-1278">Translocase</keyword>
<keyword id="KW-0812">Transmembrane</keyword>
<keyword id="KW-1133">Transmembrane helix</keyword>
<keyword id="KW-0813">Transport</keyword>
<organism>
    <name type="scientific">Methanosarcina acetivorans (strain ATCC 35395 / DSM 2834 / JCM 12185 / C2A)</name>
    <dbReference type="NCBI Taxonomy" id="188937"/>
    <lineage>
        <taxon>Archaea</taxon>
        <taxon>Methanobacteriati</taxon>
        <taxon>Methanobacteriota</taxon>
        <taxon>Stenosarchaea group</taxon>
        <taxon>Methanomicrobia</taxon>
        <taxon>Methanosarcinales</taxon>
        <taxon>Methanosarcinaceae</taxon>
        <taxon>Methanosarcina</taxon>
    </lineage>
</organism>
<name>RNFA_METAC</name>
<dbReference type="EC" id="7.2.1.-" evidence="1 3"/>
<dbReference type="EMBL" id="AE010299">
    <property type="protein sequence ID" value="AAM04105.1"/>
    <property type="molecule type" value="Genomic_DNA"/>
</dbReference>
<dbReference type="SMR" id="Q8TSY0"/>
<dbReference type="STRING" id="188937.MA_0663"/>
<dbReference type="TCDB" id="3.D.6.1.3">
    <property type="family name" value="the ion (h(+) or na(+))-translocating nadh:ferredoxin oxidoreductase (nfo or rnf) family"/>
</dbReference>
<dbReference type="EnsemblBacteria" id="AAM04105">
    <property type="protein sequence ID" value="AAM04105"/>
    <property type="gene ID" value="MA_0663"/>
</dbReference>
<dbReference type="KEGG" id="mac:MA_0663"/>
<dbReference type="HOGENOM" id="CLU_095255_1_0_2"/>
<dbReference type="InParanoid" id="Q8TSY0"/>
<dbReference type="PhylomeDB" id="Q8TSY0"/>
<dbReference type="BRENDA" id="7.2.1.2">
    <property type="organism ID" value="7224"/>
</dbReference>
<dbReference type="Proteomes" id="UP000002487">
    <property type="component" value="Chromosome"/>
</dbReference>
<dbReference type="GO" id="GO:0005886">
    <property type="term" value="C:plasma membrane"/>
    <property type="evidence" value="ECO:0000318"/>
    <property type="project" value="GO_Central"/>
</dbReference>
<dbReference type="GO" id="GO:0022900">
    <property type="term" value="P:electron transport chain"/>
    <property type="evidence" value="ECO:0007669"/>
    <property type="project" value="UniProtKB-UniRule"/>
</dbReference>
<dbReference type="HAMAP" id="MF_00459">
    <property type="entry name" value="RsxA_RnfA"/>
    <property type="match status" value="1"/>
</dbReference>
<dbReference type="InterPro" id="IPR011293">
    <property type="entry name" value="Ion_transpt_RnfA/RsxA"/>
</dbReference>
<dbReference type="InterPro" id="IPR049674">
    <property type="entry name" value="Ion_transpt_RnfA_Methano"/>
</dbReference>
<dbReference type="InterPro" id="IPR003667">
    <property type="entry name" value="NqrDE/RnfAE"/>
</dbReference>
<dbReference type="InterPro" id="IPR050133">
    <property type="entry name" value="NqrDE/RnfAE_oxidrdctase"/>
</dbReference>
<dbReference type="NCBIfam" id="TIGR01943">
    <property type="entry name" value="rnfA"/>
    <property type="match status" value="1"/>
</dbReference>
<dbReference type="NCBIfam" id="NF041835">
    <property type="entry name" value="rnfA_Methano"/>
    <property type="match status" value="1"/>
</dbReference>
<dbReference type="PANTHER" id="PTHR30335">
    <property type="entry name" value="INTEGRAL MEMBRANE PROTEIN OF SOXR-REDUCING COMPLEX"/>
    <property type="match status" value="1"/>
</dbReference>
<dbReference type="PANTHER" id="PTHR30335:SF0">
    <property type="entry name" value="ION-TRANSLOCATING OXIDOREDUCTASE COMPLEX SUBUNIT A"/>
    <property type="match status" value="1"/>
</dbReference>
<dbReference type="Pfam" id="PF02508">
    <property type="entry name" value="Rnf-Nqr"/>
    <property type="match status" value="1"/>
</dbReference>
<dbReference type="PIRSF" id="PIRSF006102">
    <property type="entry name" value="NQR_DE"/>
    <property type="match status" value="1"/>
</dbReference>
<reference key="1">
    <citation type="journal article" date="2002" name="Genome Res.">
        <title>The genome of Methanosarcina acetivorans reveals extensive metabolic and physiological diversity.</title>
        <authorList>
            <person name="Galagan J.E."/>
            <person name="Nusbaum C."/>
            <person name="Roy A."/>
            <person name="Endrizzi M.G."/>
            <person name="Macdonald P."/>
            <person name="FitzHugh W."/>
            <person name="Calvo S."/>
            <person name="Engels R."/>
            <person name="Smirnov S."/>
            <person name="Atnoor D."/>
            <person name="Brown A."/>
            <person name="Allen N."/>
            <person name="Naylor J."/>
            <person name="Stange-Thomann N."/>
            <person name="DeArellano K."/>
            <person name="Johnson R."/>
            <person name="Linton L."/>
            <person name="McEwan P."/>
            <person name="McKernan K."/>
            <person name="Talamas J."/>
            <person name="Tirrell A."/>
            <person name="Ye W."/>
            <person name="Zimmer A."/>
            <person name="Barber R.D."/>
            <person name="Cann I."/>
            <person name="Graham D.E."/>
            <person name="Grahame D.A."/>
            <person name="Guss A.M."/>
            <person name="Hedderich R."/>
            <person name="Ingram-Smith C."/>
            <person name="Kuettner H.C."/>
            <person name="Krzycki J.A."/>
            <person name="Leigh J.A."/>
            <person name="Li W."/>
            <person name="Liu J."/>
            <person name="Mukhopadhyay B."/>
            <person name="Reeve J.N."/>
            <person name="Smith K."/>
            <person name="Springer T.A."/>
            <person name="Umayam L.A."/>
            <person name="White O."/>
            <person name="White R.H."/>
            <person name="de Macario E.C."/>
            <person name="Ferry J.G."/>
            <person name="Jarrell K.F."/>
            <person name="Jing H."/>
            <person name="Macario A.J.L."/>
            <person name="Paulsen I.T."/>
            <person name="Pritchett M."/>
            <person name="Sowers K.R."/>
            <person name="Swanson R.V."/>
            <person name="Zinder S.H."/>
            <person name="Lander E."/>
            <person name="Metcalf W.W."/>
            <person name="Birren B."/>
        </authorList>
    </citation>
    <scope>NUCLEOTIDE SEQUENCE [LARGE SCALE GENOMIC DNA]</scope>
    <source>
        <strain>ATCC 35395 / DSM 2834 / JCM 12185 / C2A</strain>
    </source>
</reference>
<reference key="2">
    <citation type="journal article" date="2012" name="FEBS J.">
        <title>Electron transport during aceticlastic methanogenesis by Methanosarcina acetivorans involves a sodium-translocating Rnf complex.</title>
        <authorList>
            <person name="Schlegel K."/>
            <person name="Welte C."/>
            <person name="Deppenmeier U."/>
            <person name="Mueller V."/>
        </authorList>
    </citation>
    <scope>FUNCTION</scope>
    <scope>SUBUNIT</scope>
    <scope>DISRUPTION PHENOTYPE</scope>
    <source>
        <strain>ATCC 35395 / DSM 2834 / JCM 12185 / C2A</strain>
    </source>
</reference>
<evidence type="ECO:0000255" key="1">
    <source>
        <dbReference type="HAMAP-Rule" id="MF_00459"/>
    </source>
</evidence>
<evidence type="ECO:0000269" key="2">
    <source>
    </source>
</evidence>
<evidence type="ECO:0000305" key="3"/>
<evidence type="ECO:0000305" key="4">
    <source>
    </source>
</evidence>
<evidence type="ECO:0000312" key="5">
    <source>
        <dbReference type="EMBL" id="AAM04105.1"/>
    </source>
</evidence>
<sequence>MVKMAESLFTIFLEGVFIKNFLLIQFLGLCSFVGVTKDLKSASGMSGAVVFVMAMAATVSFALYNFILVPLKLEFLRTIAFIVVIAALVQLVEFIVRKHVPALYRSLGIYLPLITTNCAVLGAVLLNVMNDYDLAQSVVFGVAAGLGYTVAMLMMAAIRERSDLVEVPKSVGRGVTYAFFIATIMSMSFVNFFGVIPLE</sequence>
<proteinExistence type="evidence at protein level"/>
<feature type="chain" id="PRO_0000443485" description="Ion-translocating oxidoreductase complex subunit A">
    <location>
        <begin position="1"/>
        <end position="199"/>
    </location>
</feature>
<feature type="transmembrane region" description="Helical" evidence="1">
    <location>
        <begin position="8"/>
        <end position="28"/>
    </location>
</feature>
<feature type="transmembrane region" description="Helical" evidence="1">
    <location>
        <begin position="49"/>
        <end position="69"/>
    </location>
</feature>
<feature type="transmembrane region" description="Helical" evidence="1">
    <location>
        <begin position="75"/>
        <end position="95"/>
    </location>
</feature>
<feature type="transmembrane region" description="Helical" evidence="1">
    <location>
        <begin position="106"/>
        <end position="126"/>
    </location>
</feature>
<feature type="transmembrane region" description="Helical" evidence="1">
    <location>
        <begin position="138"/>
        <end position="158"/>
    </location>
</feature>
<feature type="transmembrane region" description="Helical" evidence="1">
    <location>
        <begin position="178"/>
        <end position="198"/>
    </location>
</feature>
<accession>Q8TSY0</accession>